<keyword id="KW-0456">Lyase</keyword>
<organism>
    <name type="scientific">Coxiella burnetii (strain Dugway 5J108-111)</name>
    <dbReference type="NCBI Taxonomy" id="434922"/>
    <lineage>
        <taxon>Bacteria</taxon>
        <taxon>Pseudomonadati</taxon>
        <taxon>Pseudomonadota</taxon>
        <taxon>Gammaproteobacteria</taxon>
        <taxon>Legionellales</taxon>
        <taxon>Coxiellaceae</taxon>
        <taxon>Coxiella</taxon>
    </lineage>
</organism>
<reference key="1">
    <citation type="journal article" date="2009" name="Infect. Immun.">
        <title>Comparative genomics reveal extensive transposon-mediated genomic plasticity and diversity among potential effector proteins within the genus Coxiella.</title>
        <authorList>
            <person name="Beare P.A."/>
            <person name="Unsworth N."/>
            <person name="Andoh M."/>
            <person name="Voth D.E."/>
            <person name="Omsland A."/>
            <person name="Gilk S.D."/>
            <person name="Williams K.P."/>
            <person name="Sobral B.W."/>
            <person name="Kupko J.J. III"/>
            <person name="Porcella S.F."/>
            <person name="Samuel J.E."/>
            <person name="Heinzen R.A."/>
        </authorList>
    </citation>
    <scope>NUCLEOTIDE SEQUENCE [LARGE SCALE GENOMIC DNA]</scope>
    <source>
        <strain>Dugway 5J108-111</strain>
    </source>
</reference>
<gene>
    <name evidence="1" type="primary">mgsA</name>
    <name type="ordered locus">CBUD_0918</name>
</gene>
<sequence>MTVKKIALVAHDRMKKELIEWIKKHQNLLKHHELYATGSTGQAIEKTLNVTVTKMESGPLGGDLQLGAKIVNKEIDILIFFWDPLEAQPHDPDVRALLRIAVVWNLPVACNASTADYLLTSPLFDSDYHPETPDYEAYRNRII</sequence>
<evidence type="ECO:0000255" key="1">
    <source>
        <dbReference type="HAMAP-Rule" id="MF_00549"/>
    </source>
</evidence>
<evidence type="ECO:0000305" key="2"/>
<comment type="function">
    <text evidence="1">Catalyzes the formation of methylglyoxal from dihydroxyacetone phosphate.</text>
</comment>
<comment type="catalytic activity">
    <reaction evidence="1">
        <text>dihydroxyacetone phosphate = methylglyoxal + phosphate</text>
        <dbReference type="Rhea" id="RHEA:17937"/>
        <dbReference type="ChEBI" id="CHEBI:17158"/>
        <dbReference type="ChEBI" id="CHEBI:43474"/>
        <dbReference type="ChEBI" id="CHEBI:57642"/>
        <dbReference type="EC" id="4.2.3.3"/>
    </reaction>
</comment>
<comment type="similarity">
    <text evidence="1">Belongs to the methylglyoxal synthase family.</text>
</comment>
<comment type="sequence caution" evidence="2">
    <conflict type="erroneous initiation">
        <sequence resource="EMBL-CDS" id="ABS78087"/>
    </conflict>
</comment>
<protein>
    <recommendedName>
        <fullName evidence="1">Methylglyoxal synthase</fullName>
        <shortName evidence="1">MGS</shortName>
        <ecNumber evidence="1">4.2.3.3</ecNumber>
    </recommendedName>
</protein>
<accession>A9KFK7</accession>
<feature type="chain" id="PRO_1000081953" description="Methylglyoxal synthase">
    <location>
        <begin position="1"/>
        <end position="143"/>
    </location>
</feature>
<feature type="domain" description="MGS-like" evidence="1">
    <location>
        <begin position="1"/>
        <end position="143"/>
    </location>
</feature>
<feature type="active site" description="Proton donor/acceptor" evidence="1">
    <location>
        <position position="63"/>
    </location>
</feature>
<feature type="binding site" evidence="1">
    <location>
        <position position="11"/>
    </location>
    <ligand>
        <name>substrate</name>
    </ligand>
</feature>
<feature type="binding site" evidence="1">
    <location>
        <position position="15"/>
    </location>
    <ligand>
        <name>substrate</name>
    </ligand>
</feature>
<feature type="binding site" evidence="1">
    <location>
        <begin position="37"/>
        <end position="40"/>
    </location>
    <ligand>
        <name>substrate</name>
    </ligand>
</feature>
<feature type="binding site" evidence="1">
    <location>
        <begin position="57"/>
        <end position="58"/>
    </location>
    <ligand>
        <name>substrate</name>
    </ligand>
</feature>
<feature type="binding site" evidence="1">
    <location>
        <position position="90"/>
    </location>
    <ligand>
        <name>substrate</name>
    </ligand>
</feature>
<proteinExistence type="inferred from homology"/>
<dbReference type="EC" id="4.2.3.3" evidence="1"/>
<dbReference type="EMBL" id="CP000733">
    <property type="protein sequence ID" value="ABS78087.2"/>
    <property type="status" value="ALT_INIT"/>
    <property type="molecule type" value="Genomic_DNA"/>
</dbReference>
<dbReference type="SMR" id="A9KFK7"/>
<dbReference type="KEGG" id="cbd:CBUD_0918"/>
<dbReference type="HOGENOM" id="CLU_120420_0_1_6"/>
<dbReference type="Proteomes" id="UP000008555">
    <property type="component" value="Chromosome"/>
</dbReference>
<dbReference type="GO" id="GO:0005829">
    <property type="term" value="C:cytosol"/>
    <property type="evidence" value="ECO:0007669"/>
    <property type="project" value="TreeGrafter"/>
</dbReference>
<dbReference type="GO" id="GO:0008929">
    <property type="term" value="F:methylglyoxal synthase activity"/>
    <property type="evidence" value="ECO:0007669"/>
    <property type="project" value="UniProtKB-UniRule"/>
</dbReference>
<dbReference type="GO" id="GO:0019242">
    <property type="term" value="P:methylglyoxal biosynthetic process"/>
    <property type="evidence" value="ECO:0007669"/>
    <property type="project" value="UniProtKB-UniRule"/>
</dbReference>
<dbReference type="CDD" id="cd01422">
    <property type="entry name" value="MGS"/>
    <property type="match status" value="1"/>
</dbReference>
<dbReference type="FunFam" id="3.40.50.1380:FF:000006">
    <property type="entry name" value="Methylglyoxal synthase"/>
    <property type="match status" value="1"/>
</dbReference>
<dbReference type="Gene3D" id="3.40.50.1380">
    <property type="entry name" value="Methylglyoxal synthase-like domain"/>
    <property type="match status" value="1"/>
</dbReference>
<dbReference type="HAMAP" id="MF_00549">
    <property type="entry name" value="Methylglyoxal_synth"/>
    <property type="match status" value="1"/>
</dbReference>
<dbReference type="InterPro" id="IPR004363">
    <property type="entry name" value="Methylgl_synth"/>
</dbReference>
<dbReference type="InterPro" id="IPR018148">
    <property type="entry name" value="Methylglyoxal_synth_AS"/>
</dbReference>
<dbReference type="InterPro" id="IPR011607">
    <property type="entry name" value="MGS-like_dom"/>
</dbReference>
<dbReference type="InterPro" id="IPR036914">
    <property type="entry name" value="MGS-like_dom_sf"/>
</dbReference>
<dbReference type="NCBIfam" id="TIGR00160">
    <property type="entry name" value="MGSA"/>
    <property type="match status" value="1"/>
</dbReference>
<dbReference type="NCBIfam" id="NF003559">
    <property type="entry name" value="PRK05234.1"/>
    <property type="match status" value="1"/>
</dbReference>
<dbReference type="PANTHER" id="PTHR30492">
    <property type="entry name" value="METHYLGLYOXAL SYNTHASE"/>
    <property type="match status" value="1"/>
</dbReference>
<dbReference type="PANTHER" id="PTHR30492:SF0">
    <property type="entry name" value="METHYLGLYOXAL SYNTHASE"/>
    <property type="match status" value="1"/>
</dbReference>
<dbReference type="Pfam" id="PF02142">
    <property type="entry name" value="MGS"/>
    <property type="match status" value="1"/>
</dbReference>
<dbReference type="PIRSF" id="PIRSF006614">
    <property type="entry name" value="Methylglyox_syn"/>
    <property type="match status" value="1"/>
</dbReference>
<dbReference type="SMART" id="SM00851">
    <property type="entry name" value="MGS"/>
    <property type="match status" value="1"/>
</dbReference>
<dbReference type="SUPFAM" id="SSF52335">
    <property type="entry name" value="Methylglyoxal synthase-like"/>
    <property type="match status" value="1"/>
</dbReference>
<dbReference type="PROSITE" id="PS01335">
    <property type="entry name" value="METHYLGLYOXAL_SYNTH"/>
    <property type="match status" value="1"/>
</dbReference>
<dbReference type="PROSITE" id="PS51855">
    <property type="entry name" value="MGS"/>
    <property type="match status" value="1"/>
</dbReference>
<name>MGSA_COXBN</name>